<organism>
    <name type="scientific">Xylella fastidiosa (strain M23)</name>
    <dbReference type="NCBI Taxonomy" id="405441"/>
    <lineage>
        <taxon>Bacteria</taxon>
        <taxon>Pseudomonadati</taxon>
        <taxon>Pseudomonadota</taxon>
        <taxon>Gammaproteobacteria</taxon>
        <taxon>Lysobacterales</taxon>
        <taxon>Lysobacteraceae</taxon>
        <taxon>Xylella</taxon>
    </lineage>
</organism>
<accession>B2I5X7</accession>
<sequence>MNFIVYPALDIRNGAVVRLQQGDYARQTRYDDQVLPRAQAFADSGATWMHLVDLDAAKAGGYTLAPLLRQITRATGLQVQTGGGVRSRDDVARILDAGAARVVIGSLAVRQMTCVIEWLQAFGPERITVALDTRQDAGGVWRLPVHGWTEVAEATLEALAQQYAAAGLRHLLCTDIARDGMLSGPNMDVYAYLRALVPAVQIQVSGGARDVADVVAAKMAGCAGIVLGKALLEGRLALKEAVQHGSVADPGDPLPCGELTEPVCRYRSV</sequence>
<keyword id="KW-0028">Amino-acid biosynthesis</keyword>
<keyword id="KW-0963">Cytoplasm</keyword>
<keyword id="KW-0368">Histidine biosynthesis</keyword>
<keyword id="KW-0413">Isomerase</keyword>
<gene>
    <name evidence="1" type="primary">hisA</name>
    <name type="ordered locus">XfasM23_1348</name>
</gene>
<comment type="catalytic activity">
    <reaction evidence="1">
        <text>1-(5-phospho-beta-D-ribosyl)-5-[(5-phospho-beta-D-ribosylamino)methylideneamino]imidazole-4-carboxamide = 5-[(5-phospho-1-deoxy-D-ribulos-1-ylimino)methylamino]-1-(5-phospho-beta-D-ribosyl)imidazole-4-carboxamide</text>
        <dbReference type="Rhea" id="RHEA:15469"/>
        <dbReference type="ChEBI" id="CHEBI:58435"/>
        <dbReference type="ChEBI" id="CHEBI:58525"/>
        <dbReference type="EC" id="5.3.1.16"/>
    </reaction>
</comment>
<comment type="pathway">
    <text evidence="1">Amino-acid biosynthesis; L-histidine biosynthesis; L-histidine from 5-phospho-alpha-D-ribose 1-diphosphate: step 4/9.</text>
</comment>
<comment type="subcellular location">
    <subcellularLocation>
        <location evidence="1">Cytoplasm</location>
    </subcellularLocation>
</comment>
<comment type="similarity">
    <text evidence="1">Belongs to the HisA/HisF family.</text>
</comment>
<reference key="1">
    <citation type="journal article" date="2010" name="J. Bacteriol.">
        <title>Whole genome sequences of two Xylella fastidiosa strains (M12 and M23) causing almond leaf scorch disease in California.</title>
        <authorList>
            <person name="Chen J."/>
            <person name="Xie G."/>
            <person name="Han S."/>
            <person name="Chertkov O."/>
            <person name="Sims D."/>
            <person name="Civerolo E.L."/>
        </authorList>
    </citation>
    <scope>NUCLEOTIDE SEQUENCE [LARGE SCALE GENOMIC DNA]</scope>
    <source>
        <strain>M23</strain>
    </source>
</reference>
<name>HIS4_XYLF2</name>
<feature type="chain" id="PRO_1000190573" description="1-(5-phosphoribosyl)-5-[(5-phosphoribosylamino)methylideneamino] imidazole-4-carboxamide isomerase">
    <location>
        <begin position="1"/>
        <end position="269"/>
    </location>
</feature>
<feature type="active site" description="Proton acceptor" evidence="1">
    <location>
        <position position="10"/>
    </location>
</feature>
<feature type="active site" description="Proton donor" evidence="1">
    <location>
        <position position="132"/>
    </location>
</feature>
<evidence type="ECO:0000255" key="1">
    <source>
        <dbReference type="HAMAP-Rule" id="MF_01014"/>
    </source>
</evidence>
<dbReference type="EC" id="5.3.1.16" evidence="1"/>
<dbReference type="EMBL" id="CP001011">
    <property type="protein sequence ID" value="ACB92766.1"/>
    <property type="molecule type" value="Genomic_DNA"/>
</dbReference>
<dbReference type="RefSeq" id="WP_004088318.1">
    <property type="nucleotide sequence ID" value="NC_010577.1"/>
</dbReference>
<dbReference type="SMR" id="B2I5X7"/>
<dbReference type="GeneID" id="93905074"/>
<dbReference type="KEGG" id="xfn:XfasM23_1348"/>
<dbReference type="HOGENOM" id="CLU_048577_1_2_6"/>
<dbReference type="UniPathway" id="UPA00031">
    <property type="reaction ID" value="UER00009"/>
</dbReference>
<dbReference type="Proteomes" id="UP000001698">
    <property type="component" value="Chromosome"/>
</dbReference>
<dbReference type="GO" id="GO:0005737">
    <property type="term" value="C:cytoplasm"/>
    <property type="evidence" value="ECO:0007669"/>
    <property type="project" value="UniProtKB-SubCell"/>
</dbReference>
<dbReference type="GO" id="GO:0003949">
    <property type="term" value="F:1-(5-phosphoribosyl)-5-[(5-phosphoribosylamino)methylideneamino]imidazole-4-carboxamide isomerase activity"/>
    <property type="evidence" value="ECO:0007669"/>
    <property type="project" value="UniProtKB-UniRule"/>
</dbReference>
<dbReference type="GO" id="GO:0000105">
    <property type="term" value="P:L-histidine biosynthetic process"/>
    <property type="evidence" value="ECO:0007669"/>
    <property type="project" value="UniProtKB-UniRule"/>
</dbReference>
<dbReference type="GO" id="GO:0000162">
    <property type="term" value="P:L-tryptophan biosynthetic process"/>
    <property type="evidence" value="ECO:0007669"/>
    <property type="project" value="TreeGrafter"/>
</dbReference>
<dbReference type="CDD" id="cd04732">
    <property type="entry name" value="HisA"/>
    <property type="match status" value="1"/>
</dbReference>
<dbReference type="FunFam" id="3.20.20.70:FF:000009">
    <property type="entry name" value="1-(5-phosphoribosyl)-5-[(5-phosphoribosylamino)methylideneamino] imidazole-4-carboxamide isomerase"/>
    <property type="match status" value="1"/>
</dbReference>
<dbReference type="Gene3D" id="3.20.20.70">
    <property type="entry name" value="Aldolase class I"/>
    <property type="match status" value="1"/>
</dbReference>
<dbReference type="HAMAP" id="MF_01014">
    <property type="entry name" value="HisA"/>
    <property type="match status" value="1"/>
</dbReference>
<dbReference type="InterPro" id="IPR013785">
    <property type="entry name" value="Aldolase_TIM"/>
</dbReference>
<dbReference type="InterPro" id="IPR006062">
    <property type="entry name" value="His_biosynth"/>
</dbReference>
<dbReference type="InterPro" id="IPR006063">
    <property type="entry name" value="HisA_bact_arch"/>
</dbReference>
<dbReference type="InterPro" id="IPR044524">
    <property type="entry name" value="Isoase_HisA-like"/>
</dbReference>
<dbReference type="InterPro" id="IPR023016">
    <property type="entry name" value="Isoase_HisA-like_bact"/>
</dbReference>
<dbReference type="InterPro" id="IPR011060">
    <property type="entry name" value="RibuloseP-bd_barrel"/>
</dbReference>
<dbReference type="NCBIfam" id="TIGR00007">
    <property type="entry name" value="1-(5-phosphoribosyl)-5-[(5-phosphoribosylamino)methylideneamino]imidazole-4-carboxamide isomerase"/>
    <property type="match status" value="1"/>
</dbReference>
<dbReference type="PANTHER" id="PTHR43090">
    <property type="entry name" value="1-(5-PHOSPHORIBOSYL)-5-[(5-PHOSPHORIBOSYLAMINO)METHYLIDENEAMINO] IMIDAZOLE-4-CARBOXAMIDE ISOMERASE"/>
    <property type="match status" value="1"/>
</dbReference>
<dbReference type="PANTHER" id="PTHR43090:SF2">
    <property type="entry name" value="1-(5-PHOSPHORIBOSYL)-5-[(5-PHOSPHORIBOSYLAMINO)METHYLIDENEAMINO] IMIDAZOLE-4-CARBOXAMIDE ISOMERASE"/>
    <property type="match status" value="1"/>
</dbReference>
<dbReference type="Pfam" id="PF00977">
    <property type="entry name" value="His_biosynth"/>
    <property type="match status" value="1"/>
</dbReference>
<dbReference type="SUPFAM" id="SSF51366">
    <property type="entry name" value="Ribulose-phoshate binding barrel"/>
    <property type="match status" value="1"/>
</dbReference>
<protein>
    <recommendedName>
        <fullName evidence="1">1-(5-phosphoribosyl)-5-[(5-phosphoribosylamino)methylideneamino] imidazole-4-carboxamide isomerase</fullName>
        <ecNumber evidence="1">5.3.1.16</ecNumber>
    </recommendedName>
    <alternativeName>
        <fullName evidence="1">Phosphoribosylformimino-5-aminoimidazole carboxamide ribotide isomerase</fullName>
    </alternativeName>
</protein>
<proteinExistence type="inferred from homology"/>